<gene>
    <name type="ordered locus">ECU07_1860</name>
</gene>
<gene>
    <name type="ordered locus">ECU10_0040</name>
</gene>
<gene>
    <name type="ordered locus">ECU11_2100</name>
</gene>
<sequence length="135" mass="15099">MDISCYGWGNPLLFGTCPATTFRCSPGIQVIVFPFLLKGHSIVGLPTAKFSDLKRKTKRGSLGVYDGQCGVQPDDRFERLFDERMGGCIFGSIKDIRQQKQDVCELLEMVYEEDSSGTEGGWADGKVWREDYKDG</sequence>
<name>Y7I6_ENCCU</name>
<organism>
    <name type="scientific">Encephalitozoon cuniculi (strain GB-M1)</name>
    <name type="common">Microsporidian parasite</name>
    <dbReference type="NCBI Taxonomy" id="284813"/>
    <lineage>
        <taxon>Eukaryota</taxon>
        <taxon>Fungi</taxon>
        <taxon>Fungi incertae sedis</taxon>
        <taxon>Microsporidia</taxon>
        <taxon>Unikaryonidae</taxon>
        <taxon>Encephalitozoon</taxon>
    </lineage>
</organism>
<comment type="similarity">
    <text evidence="1">Belongs to the UPF0329 family.</text>
</comment>
<keyword id="KW-1185">Reference proteome</keyword>
<protein>
    <recommendedName>
        <fullName>UPF0329 protein ECU07_1860/ECU10_0040/ECU11_2100</fullName>
    </recommendedName>
</protein>
<accession>Q8ST89</accession>
<proteinExistence type="inferred from homology"/>
<dbReference type="EMBL" id="AL590447">
    <property type="protein sequence ID" value="CAD25717.1"/>
    <property type="molecule type" value="Genomic_DNA"/>
</dbReference>
<dbReference type="EMBL" id="AL590449">
    <property type="protein sequence ID" value="CAD25724.1"/>
    <property type="molecule type" value="Genomic_DNA"/>
</dbReference>
<dbReference type="EMBL" id="AL590450">
    <property type="protein sequence ID" value="CAD26120.1"/>
    <property type="molecule type" value="Genomic_DNA"/>
</dbReference>
<dbReference type="RefSeq" id="NP_586113.1">
    <property type="nucleotide sequence ID" value="NM_001041735.1"/>
</dbReference>
<dbReference type="RefSeq" id="NP_586120.1">
    <property type="nucleotide sequence ID" value="NM_001041953.1"/>
</dbReference>
<dbReference type="RefSeq" id="NP_586516.1">
    <property type="nucleotide sequence ID" value="NM_001042349.1"/>
</dbReference>
<dbReference type="GeneID" id="859547"/>
<dbReference type="GeneID" id="859766"/>
<dbReference type="GeneID" id="860170"/>
<dbReference type="KEGG" id="ecu:ECU07_1860"/>
<dbReference type="KEGG" id="ecu:ECU10_0040"/>
<dbReference type="KEGG" id="ecu:ECU11_2100"/>
<dbReference type="VEuPathDB" id="MicrosporidiaDB:ECU07_1860"/>
<dbReference type="VEuPathDB" id="MicrosporidiaDB:ECU10_0040"/>
<dbReference type="VEuPathDB" id="MicrosporidiaDB:ECU11_2100"/>
<dbReference type="HOGENOM" id="CLU_1885740_0_0_1"/>
<dbReference type="InParanoid" id="Q8ST89"/>
<dbReference type="Proteomes" id="UP000000819">
    <property type="component" value="Chromosome VII"/>
</dbReference>
<dbReference type="Proteomes" id="UP000000819">
    <property type="component" value="Chromosome X"/>
</dbReference>
<dbReference type="Proteomes" id="UP000000819">
    <property type="component" value="Chromosome XI"/>
</dbReference>
<reference key="1">
    <citation type="journal article" date="2001" name="Nature">
        <title>Genome sequence and gene compaction of the eukaryote parasite Encephalitozoon cuniculi.</title>
        <authorList>
            <person name="Katinka M.D."/>
            <person name="Duprat S."/>
            <person name="Cornillot E."/>
            <person name="Metenier G."/>
            <person name="Thomarat F."/>
            <person name="Prensier G."/>
            <person name="Barbe V."/>
            <person name="Peyretaillade E."/>
            <person name="Brottier P."/>
            <person name="Wincker P."/>
            <person name="Delbac F."/>
            <person name="El Alaoui H."/>
            <person name="Peyret P."/>
            <person name="Saurin W."/>
            <person name="Gouy M."/>
            <person name="Weissenbach J."/>
            <person name="Vivares C.P."/>
        </authorList>
    </citation>
    <scope>NUCLEOTIDE SEQUENCE [LARGE SCALE GENOMIC DNA]</scope>
    <source>
        <strain>GB-M1</strain>
    </source>
</reference>
<evidence type="ECO:0000305" key="1"/>
<feature type="chain" id="PRO_0000223172" description="UPF0329 protein ECU07_1860/ECU10_0040/ECU11_2100">
    <location>
        <begin position="1"/>
        <end position="135"/>
    </location>
</feature>